<comment type="function">
    <text evidence="3">Acts as an activating immune receptor in mast cells through its interaction with ITAM-bearing adapter TYROBP.</text>
</comment>
<comment type="subunit">
    <text evidence="3">Interacts with TYROBP, which enhances cell surface expression and activation properties. May interact with HCST.</text>
</comment>
<comment type="subcellular location">
    <subcellularLocation>
        <location evidence="3">Cell membrane</location>
        <topology evidence="3">Single-pass type I membrane protein</topology>
    </subcellularLocation>
</comment>
<comment type="tissue specificity">
    <text evidence="3">Expressed in myeloid cells (at protein level).</text>
</comment>
<comment type="PTM">
    <text evidence="3">N-glycosylated.</text>
</comment>
<comment type="similarity">
    <text evidence="4">Belongs to the CD300 family.</text>
</comment>
<comment type="sequence caution" evidence="4">
    <conflict type="erroneous initiation">
        <sequence resource="EMBL-CDS" id="BAE32536"/>
    </conflict>
</comment>
<comment type="sequence caution" evidence="4">
    <conflict type="frameshift">
        <sequence resource="EMBL" id="BC107351"/>
    </conflict>
</comment>
<protein>
    <recommendedName>
        <fullName>CMRF35-like molecule 7</fullName>
        <shortName>CLM-7</shortName>
    </recommendedName>
    <alternativeName>
        <fullName>CD300 antigen-like family member B</fullName>
    </alternativeName>
    <alternativeName>
        <fullName>Immune receptor expressed on myeloid cells 3</fullName>
        <shortName>IREM-3</shortName>
    </alternativeName>
    <alternativeName>
        <fullName>Leukocyte mono-Ig-like receptor 5</fullName>
    </alternativeName>
    <cdAntigenName>CD300b</cdAntigenName>
</protein>
<dbReference type="EMBL" id="AY457053">
    <property type="protein sequence ID" value="AAR27944.1"/>
    <property type="molecule type" value="mRNA"/>
</dbReference>
<dbReference type="EMBL" id="AY996128">
    <property type="protein sequence ID" value="AAY56360.1"/>
    <property type="molecule type" value="mRNA"/>
</dbReference>
<dbReference type="EMBL" id="AB300703">
    <property type="protein sequence ID" value="BAF56590.1"/>
    <property type="molecule type" value="mRNA"/>
</dbReference>
<dbReference type="EMBL" id="AK154359">
    <property type="protein sequence ID" value="BAE32536.1"/>
    <property type="status" value="ALT_INIT"/>
    <property type="molecule type" value="mRNA"/>
</dbReference>
<dbReference type="EMBL" id="AK170613">
    <property type="protein sequence ID" value="BAE41912.1"/>
    <property type="molecule type" value="mRNA"/>
</dbReference>
<dbReference type="EMBL" id="AL669969">
    <property type="protein sequence ID" value="CAM18752.1"/>
    <property type="molecule type" value="Genomic_DNA"/>
</dbReference>
<dbReference type="EMBL" id="AL607025">
    <property type="protein sequence ID" value="CAM18752.1"/>
    <property type="status" value="JOINED"/>
    <property type="molecule type" value="Genomic_DNA"/>
</dbReference>
<dbReference type="EMBL" id="BC107351">
    <property type="status" value="NOT_ANNOTATED_CDS"/>
    <property type="molecule type" value="mRNA"/>
</dbReference>
<dbReference type="CCDS" id="CCDS25614.2"/>
<dbReference type="RefSeq" id="NP_954691.3">
    <property type="nucleotide sequence ID" value="NM_199221.3"/>
</dbReference>
<dbReference type="SMR" id="Q3U497"/>
<dbReference type="FunCoup" id="Q3U497">
    <property type="interactions" value="1242"/>
</dbReference>
<dbReference type="STRING" id="10090.ENSMUSP00000102191"/>
<dbReference type="GlyCosmos" id="Q3U497">
    <property type="glycosylation" value="1 site, No reported glycans"/>
</dbReference>
<dbReference type="GlyGen" id="Q3U497">
    <property type="glycosylation" value="1 site"/>
</dbReference>
<dbReference type="iPTMnet" id="Q3U497"/>
<dbReference type="PhosphoSitePlus" id="Q3U497"/>
<dbReference type="PaxDb" id="10090-ENSMUSP00000073913"/>
<dbReference type="ProteomicsDB" id="283307"/>
<dbReference type="Antibodypedia" id="53132">
    <property type="antibodies" value="110 antibodies from 22 providers"/>
</dbReference>
<dbReference type="DNASU" id="217304"/>
<dbReference type="Ensembl" id="ENSMUST00000239005.2">
    <property type="protein sequence ID" value="ENSMUSP00000159146.2"/>
    <property type="gene ID" value="ENSMUSG00000063193.10"/>
</dbReference>
<dbReference type="GeneID" id="217304"/>
<dbReference type="KEGG" id="mmu:217304"/>
<dbReference type="UCSC" id="uc007mgb.1">
    <property type="organism name" value="mouse"/>
</dbReference>
<dbReference type="AGR" id="MGI:2685099"/>
<dbReference type="CTD" id="124599"/>
<dbReference type="MGI" id="MGI:2685099">
    <property type="gene designation" value="Cd300lb"/>
</dbReference>
<dbReference type="VEuPathDB" id="HostDB:ENSMUSG00000063193"/>
<dbReference type="eggNOG" id="ENOG502S7MA">
    <property type="taxonomic scope" value="Eukaryota"/>
</dbReference>
<dbReference type="GeneTree" id="ENSGT00940000162729"/>
<dbReference type="HOGENOM" id="CLU_051023_3_1_1"/>
<dbReference type="InParanoid" id="Q3U497"/>
<dbReference type="OMA" id="EPGDQPI"/>
<dbReference type="OrthoDB" id="8920197at2759"/>
<dbReference type="PhylomeDB" id="Q3U497"/>
<dbReference type="Reactome" id="R-MMU-198933">
    <property type="pathway name" value="Immunoregulatory interactions between a Lymphoid and a non-Lymphoid cell"/>
</dbReference>
<dbReference type="Reactome" id="R-MMU-2172127">
    <property type="pathway name" value="DAP12 interactions"/>
</dbReference>
<dbReference type="BioGRID-ORCS" id="217304">
    <property type="hits" value="3 hits in 76 CRISPR screens"/>
</dbReference>
<dbReference type="PRO" id="PR:Q3U497"/>
<dbReference type="Proteomes" id="UP000000589">
    <property type="component" value="Chromosome 11"/>
</dbReference>
<dbReference type="RNAct" id="Q3U497">
    <property type="molecule type" value="protein"/>
</dbReference>
<dbReference type="Bgee" id="ENSMUSG00000063193">
    <property type="expression patterns" value="Expressed in granulocyte and 57 other cell types or tissues"/>
</dbReference>
<dbReference type="ExpressionAtlas" id="Q3U497">
    <property type="expression patterns" value="baseline and differential"/>
</dbReference>
<dbReference type="GO" id="GO:0005886">
    <property type="term" value="C:plasma membrane"/>
    <property type="evidence" value="ECO:0007669"/>
    <property type="project" value="UniProtKB-SubCell"/>
</dbReference>
<dbReference type="GO" id="GO:0071222">
    <property type="term" value="P:cellular response to lipopolysaccharide"/>
    <property type="evidence" value="ECO:0000315"/>
    <property type="project" value="MGI"/>
</dbReference>
<dbReference type="GO" id="GO:0002446">
    <property type="term" value="P:neutrophil mediated immunity"/>
    <property type="evidence" value="ECO:0000315"/>
    <property type="project" value="MGI"/>
</dbReference>
<dbReference type="GO" id="GO:0033005">
    <property type="term" value="P:positive regulation of mast cell activation"/>
    <property type="evidence" value="ECO:0000314"/>
    <property type="project" value="MGI"/>
</dbReference>
<dbReference type="CDD" id="cd05716">
    <property type="entry name" value="IgV_pIgR_like"/>
    <property type="match status" value="1"/>
</dbReference>
<dbReference type="FunFam" id="2.60.40.10:FF:000370">
    <property type="entry name" value="CMRF35-like molecule 1"/>
    <property type="match status" value="1"/>
</dbReference>
<dbReference type="Gene3D" id="2.60.40.10">
    <property type="entry name" value="Immunoglobulins"/>
    <property type="match status" value="1"/>
</dbReference>
<dbReference type="InterPro" id="IPR050671">
    <property type="entry name" value="CD300_family_receptors"/>
</dbReference>
<dbReference type="InterPro" id="IPR036179">
    <property type="entry name" value="Ig-like_dom_sf"/>
</dbReference>
<dbReference type="InterPro" id="IPR013783">
    <property type="entry name" value="Ig-like_fold"/>
</dbReference>
<dbReference type="InterPro" id="IPR003599">
    <property type="entry name" value="Ig_sub"/>
</dbReference>
<dbReference type="InterPro" id="IPR013106">
    <property type="entry name" value="Ig_V-set"/>
</dbReference>
<dbReference type="PANTHER" id="PTHR11860:SF103">
    <property type="entry name" value="CMRF35-LIKE MOLECULE 7"/>
    <property type="match status" value="1"/>
</dbReference>
<dbReference type="PANTHER" id="PTHR11860">
    <property type="entry name" value="POLYMERIC-IMMUNOGLOBULIN RECEPTOR"/>
    <property type="match status" value="1"/>
</dbReference>
<dbReference type="Pfam" id="PF07686">
    <property type="entry name" value="V-set"/>
    <property type="match status" value="1"/>
</dbReference>
<dbReference type="SMART" id="SM00409">
    <property type="entry name" value="IG"/>
    <property type="match status" value="1"/>
</dbReference>
<dbReference type="SUPFAM" id="SSF48726">
    <property type="entry name" value="Immunoglobulin"/>
    <property type="match status" value="1"/>
</dbReference>
<feature type="signal peptide" evidence="2">
    <location>
        <begin position="1"/>
        <end position="17"/>
    </location>
</feature>
<feature type="chain" id="PRO_0000320131" description="CMRF35-like molecule 7">
    <location>
        <begin position="18"/>
        <end position="209"/>
    </location>
</feature>
<feature type="topological domain" description="Extracellular" evidence="2">
    <location>
        <begin position="18"/>
        <end position="157"/>
    </location>
</feature>
<feature type="transmembrane region" description="Helical" evidence="2">
    <location>
        <begin position="158"/>
        <end position="178"/>
    </location>
</feature>
<feature type="topological domain" description="Cytoplasmic" evidence="2">
    <location>
        <begin position="179"/>
        <end position="209"/>
    </location>
</feature>
<feature type="domain" description="Ig-like V-type">
    <location>
        <begin position="18"/>
        <end position="120"/>
    </location>
</feature>
<feature type="site" description="Interaction with TYROBP" evidence="1">
    <location>
        <position position="164"/>
    </location>
</feature>
<feature type="modified residue" description="Phosphoserine" evidence="5">
    <location>
        <position position="196"/>
    </location>
</feature>
<feature type="glycosylation site" description="N-linked (GlcNAc...) asparagine" evidence="2">
    <location>
        <position position="97"/>
    </location>
</feature>
<feature type="disulfide bond" evidence="1">
    <location>
        <begin position="36"/>
        <end position="104"/>
    </location>
</feature>
<feature type="sequence variant" description="In strain: C57BL/6.">
    <original>LAKDISP</original>
    <variation>SS</variation>
    <location>
        <begin position="203"/>
        <end position="209"/>
    </location>
</feature>
<feature type="sequence conflict" description="In Ref. 3; AAY56360." evidence="4" ref="3">
    <original>Q</original>
    <variation>P</variation>
    <location>
        <position position="19"/>
    </location>
</feature>
<feature type="sequence conflict" description="In Ref. 3; AAY56360." evidence="4" ref="3">
    <original>M</original>
    <variation>R</variation>
    <location>
        <position position="146"/>
    </location>
</feature>
<feature type="sequence conflict" description="In Ref. 3; AAY56360." evidence="4" ref="3">
    <original>R</original>
    <variation>S</variation>
    <location>
        <position position="191"/>
    </location>
</feature>
<name>CLM7_MOUSE</name>
<accession>Q3U497</accession>
<accession>Q1ED86</accession>
<accession>Q3TCP3</accession>
<accession>Q6SJQ1</accession>
<gene>
    <name type="primary">Cd300lb</name>
    <name type="synonym">Irem3</name>
    <name type="synonym">Lmir5</name>
</gene>
<organism>
    <name type="scientific">Mus musculus</name>
    <name type="common">Mouse</name>
    <dbReference type="NCBI Taxonomy" id="10090"/>
    <lineage>
        <taxon>Eukaryota</taxon>
        <taxon>Metazoa</taxon>
        <taxon>Chordata</taxon>
        <taxon>Craniata</taxon>
        <taxon>Vertebrata</taxon>
        <taxon>Euteleostomi</taxon>
        <taxon>Mammalia</taxon>
        <taxon>Eutheria</taxon>
        <taxon>Euarchontoglires</taxon>
        <taxon>Glires</taxon>
        <taxon>Rodentia</taxon>
        <taxon>Myomorpha</taxon>
        <taxon>Muroidea</taxon>
        <taxon>Muridae</taxon>
        <taxon>Murinae</taxon>
        <taxon>Mus</taxon>
        <taxon>Mus</taxon>
    </lineage>
</organism>
<proteinExistence type="evidence at protein level"/>
<sequence length="209" mass="23755">MWLSPALLLLSFPGCLSIQGPALVRGPEQGSVTVQCRYSSRWQTNKKWWCRGASWSTCRVLIRSTGSEKETKSGRLSIRDNQKNHSFQVTMEMLRQNDTDTYWCGIEKFGTDRGTRVKVNVYSVGKDTMSTSNQLPWPTVDGSTDMVSSDLQKRTYYMLLVFVKVPALLILVGAVLWLKRSTQKVPEEQWRHTLCSDLDSELLAKDISP</sequence>
<keyword id="KW-1003">Cell membrane</keyword>
<keyword id="KW-1015">Disulfide bond</keyword>
<keyword id="KW-0325">Glycoprotein</keyword>
<keyword id="KW-0391">Immunity</keyword>
<keyword id="KW-0393">Immunoglobulin domain</keyword>
<keyword id="KW-0472">Membrane</keyword>
<keyword id="KW-0597">Phosphoprotein</keyword>
<keyword id="KW-0675">Receptor</keyword>
<keyword id="KW-1185">Reference proteome</keyword>
<keyword id="KW-0732">Signal</keyword>
<keyword id="KW-0812">Transmembrane</keyword>
<keyword id="KW-1133">Transmembrane helix</keyword>
<reference key="1">
    <citation type="journal article" date="2003" name="J. Immunol.">
        <title>CMRF-35-like molecule-1, a novel mouse myeloid receptor, can inhibit osteoclast formation.</title>
        <authorList>
            <person name="Chung D.-H."/>
            <person name="Humphrey M.B."/>
            <person name="Nakamura M.C."/>
            <person name="Ginzinger D.G."/>
            <person name="Seaman W.E."/>
            <person name="Daws M.R."/>
        </authorList>
    </citation>
    <scope>NUCLEOTIDE SEQUENCE [MRNA]</scope>
    <source>
        <strain>C57BL/6J</strain>
    </source>
</reference>
<reference key="2">
    <citation type="journal article" date="2006" name="J. Immunol.">
        <title>Molecular and functional characterization of CD300b, a new activating immunoglobulin receptor able to transduce signals through two different pathways.</title>
        <authorList>
            <person name="Martinez-Barriocanal A."/>
            <person name="Sayos J."/>
        </authorList>
    </citation>
    <scope>NUCLEOTIDE SEQUENCE [MRNA]</scope>
    <source>
        <strain>BALB/cJ</strain>
    </source>
</reference>
<reference key="3">
    <citation type="journal article" date="2008" name="Blood">
        <title>Analysis of mouse LMIR5/CLM-7 as an activating receptor: differential regulation of LMIR5/CLM-7 in mouse versus human cells.</title>
        <authorList>
            <person name="Yamanishi Y."/>
            <person name="Kitaura J."/>
            <person name="Izawa K."/>
            <person name="Matsuoka T."/>
            <person name="Oki T."/>
            <person name="Lu Y."/>
            <person name="Shibata F."/>
            <person name="Yamazaki S."/>
            <person name="Kumagai H."/>
            <person name="Nakajima H."/>
            <person name="Maeda-Yamamoto M."/>
            <person name="Tybulewicz V.L.J."/>
            <person name="Takai T."/>
            <person name="Kitamura T."/>
        </authorList>
    </citation>
    <scope>NUCLEOTIDE SEQUENCE [MRNA]</scope>
    <scope>GLYCOSYLATION</scope>
    <scope>TISSUE SPECIFICITY</scope>
    <scope>SUBCELLULAR LOCATION</scope>
    <scope>INTERACTION WITH TYROBP AND HCST</scope>
    <scope>FUNCTION</scope>
    <source>
        <strain>C57BL/6J</strain>
        <strain>CBA/J</strain>
        <tissue>Mast cell</tissue>
    </source>
</reference>
<reference key="4">
    <citation type="journal article" date="2005" name="Science">
        <title>The transcriptional landscape of the mammalian genome.</title>
        <authorList>
            <person name="Carninci P."/>
            <person name="Kasukawa T."/>
            <person name="Katayama S."/>
            <person name="Gough J."/>
            <person name="Frith M.C."/>
            <person name="Maeda N."/>
            <person name="Oyama R."/>
            <person name="Ravasi T."/>
            <person name="Lenhard B."/>
            <person name="Wells C."/>
            <person name="Kodzius R."/>
            <person name="Shimokawa K."/>
            <person name="Bajic V.B."/>
            <person name="Brenner S.E."/>
            <person name="Batalov S."/>
            <person name="Forrest A.R."/>
            <person name="Zavolan M."/>
            <person name="Davis M.J."/>
            <person name="Wilming L.G."/>
            <person name="Aidinis V."/>
            <person name="Allen J.E."/>
            <person name="Ambesi-Impiombato A."/>
            <person name="Apweiler R."/>
            <person name="Aturaliya R.N."/>
            <person name="Bailey T.L."/>
            <person name="Bansal M."/>
            <person name="Baxter L."/>
            <person name="Beisel K.W."/>
            <person name="Bersano T."/>
            <person name="Bono H."/>
            <person name="Chalk A.M."/>
            <person name="Chiu K.P."/>
            <person name="Choudhary V."/>
            <person name="Christoffels A."/>
            <person name="Clutterbuck D.R."/>
            <person name="Crowe M.L."/>
            <person name="Dalla E."/>
            <person name="Dalrymple B.P."/>
            <person name="de Bono B."/>
            <person name="Della Gatta G."/>
            <person name="di Bernardo D."/>
            <person name="Down T."/>
            <person name="Engstrom P."/>
            <person name="Fagiolini M."/>
            <person name="Faulkner G."/>
            <person name="Fletcher C.F."/>
            <person name="Fukushima T."/>
            <person name="Furuno M."/>
            <person name="Futaki S."/>
            <person name="Gariboldi M."/>
            <person name="Georgii-Hemming P."/>
            <person name="Gingeras T.R."/>
            <person name="Gojobori T."/>
            <person name="Green R.E."/>
            <person name="Gustincich S."/>
            <person name="Harbers M."/>
            <person name="Hayashi Y."/>
            <person name="Hensch T.K."/>
            <person name="Hirokawa N."/>
            <person name="Hill D."/>
            <person name="Huminiecki L."/>
            <person name="Iacono M."/>
            <person name="Ikeo K."/>
            <person name="Iwama A."/>
            <person name="Ishikawa T."/>
            <person name="Jakt M."/>
            <person name="Kanapin A."/>
            <person name="Katoh M."/>
            <person name="Kawasawa Y."/>
            <person name="Kelso J."/>
            <person name="Kitamura H."/>
            <person name="Kitano H."/>
            <person name="Kollias G."/>
            <person name="Krishnan S.P."/>
            <person name="Kruger A."/>
            <person name="Kummerfeld S.K."/>
            <person name="Kurochkin I.V."/>
            <person name="Lareau L.F."/>
            <person name="Lazarevic D."/>
            <person name="Lipovich L."/>
            <person name="Liu J."/>
            <person name="Liuni S."/>
            <person name="McWilliam S."/>
            <person name="Madan Babu M."/>
            <person name="Madera M."/>
            <person name="Marchionni L."/>
            <person name="Matsuda H."/>
            <person name="Matsuzawa S."/>
            <person name="Miki H."/>
            <person name="Mignone F."/>
            <person name="Miyake S."/>
            <person name="Morris K."/>
            <person name="Mottagui-Tabar S."/>
            <person name="Mulder N."/>
            <person name="Nakano N."/>
            <person name="Nakauchi H."/>
            <person name="Ng P."/>
            <person name="Nilsson R."/>
            <person name="Nishiguchi S."/>
            <person name="Nishikawa S."/>
            <person name="Nori F."/>
            <person name="Ohara O."/>
            <person name="Okazaki Y."/>
            <person name="Orlando V."/>
            <person name="Pang K.C."/>
            <person name="Pavan W.J."/>
            <person name="Pavesi G."/>
            <person name="Pesole G."/>
            <person name="Petrovsky N."/>
            <person name="Piazza S."/>
            <person name="Reed J."/>
            <person name="Reid J.F."/>
            <person name="Ring B.Z."/>
            <person name="Ringwald M."/>
            <person name="Rost B."/>
            <person name="Ruan Y."/>
            <person name="Salzberg S.L."/>
            <person name="Sandelin A."/>
            <person name="Schneider C."/>
            <person name="Schoenbach C."/>
            <person name="Sekiguchi K."/>
            <person name="Semple C.A."/>
            <person name="Seno S."/>
            <person name="Sessa L."/>
            <person name="Sheng Y."/>
            <person name="Shibata Y."/>
            <person name="Shimada H."/>
            <person name="Shimada K."/>
            <person name="Silva D."/>
            <person name="Sinclair B."/>
            <person name="Sperling S."/>
            <person name="Stupka E."/>
            <person name="Sugiura K."/>
            <person name="Sultana R."/>
            <person name="Takenaka Y."/>
            <person name="Taki K."/>
            <person name="Tammoja K."/>
            <person name="Tan S.L."/>
            <person name="Tang S."/>
            <person name="Taylor M.S."/>
            <person name="Tegner J."/>
            <person name="Teichmann S.A."/>
            <person name="Ueda H.R."/>
            <person name="van Nimwegen E."/>
            <person name="Verardo R."/>
            <person name="Wei C.L."/>
            <person name="Yagi K."/>
            <person name="Yamanishi H."/>
            <person name="Zabarovsky E."/>
            <person name="Zhu S."/>
            <person name="Zimmer A."/>
            <person name="Hide W."/>
            <person name="Bult C."/>
            <person name="Grimmond S.M."/>
            <person name="Teasdale R.D."/>
            <person name="Liu E.T."/>
            <person name="Brusic V."/>
            <person name="Quackenbush J."/>
            <person name="Wahlestedt C."/>
            <person name="Mattick J.S."/>
            <person name="Hume D.A."/>
            <person name="Kai C."/>
            <person name="Sasaki D."/>
            <person name="Tomaru Y."/>
            <person name="Fukuda S."/>
            <person name="Kanamori-Katayama M."/>
            <person name="Suzuki M."/>
            <person name="Aoki J."/>
            <person name="Arakawa T."/>
            <person name="Iida J."/>
            <person name="Imamura K."/>
            <person name="Itoh M."/>
            <person name="Kato T."/>
            <person name="Kawaji H."/>
            <person name="Kawagashira N."/>
            <person name="Kawashima T."/>
            <person name="Kojima M."/>
            <person name="Kondo S."/>
            <person name="Konno H."/>
            <person name="Nakano K."/>
            <person name="Ninomiya N."/>
            <person name="Nishio T."/>
            <person name="Okada M."/>
            <person name="Plessy C."/>
            <person name="Shibata K."/>
            <person name="Shiraki T."/>
            <person name="Suzuki S."/>
            <person name="Tagami M."/>
            <person name="Waki K."/>
            <person name="Watahiki A."/>
            <person name="Okamura-Oho Y."/>
            <person name="Suzuki H."/>
            <person name="Kawai J."/>
            <person name="Hayashizaki Y."/>
        </authorList>
    </citation>
    <scope>NUCLEOTIDE SEQUENCE [LARGE SCALE MRNA]</scope>
    <source>
        <strain>NOD</strain>
    </source>
</reference>
<reference key="5">
    <citation type="journal article" date="2009" name="PLoS Biol.">
        <title>Lineage-specific biology revealed by a finished genome assembly of the mouse.</title>
        <authorList>
            <person name="Church D.M."/>
            <person name="Goodstadt L."/>
            <person name="Hillier L.W."/>
            <person name="Zody M.C."/>
            <person name="Goldstein S."/>
            <person name="She X."/>
            <person name="Bult C.J."/>
            <person name="Agarwala R."/>
            <person name="Cherry J.L."/>
            <person name="DiCuccio M."/>
            <person name="Hlavina W."/>
            <person name="Kapustin Y."/>
            <person name="Meric P."/>
            <person name="Maglott D."/>
            <person name="Birtle Z."/>
            <person name="Marques A.C."/>
            <person name="Graves T."/>
            <person name="Zhou S."/>
            <person name="Teague B."/>
            <person name="Potamousis K."/>
            <person name="Churas C."/>
            <person name="Place M."/>
            <person name="Herschleb J."/>
            <person name="Runnheim R."/>
            <person name="Forrest D."/>
            <person name="Amos-Landgraf J."/>
            <person name="Schwartz D.C."/>
            <person name="Cheng Z."/>
            <person name="Lindblad-Toh K."/>
            <person name="Eichler E.E."/>
            <person name="Ponting C.P."/>
        </authorList>
    </citation>
    <scope>NUCLEOTIDE SEQUENCE [LARGE SCALE GENOMIC DNA]</scope>
    <source>
        <strain>C57BL/6J</strain>
    </source>
</reference>
<reference key="6">
    <citation type="journal article" date="2004" name="Genome Res.">
        <title>The status, quality, and expansion of the NIH full-length cDNA project: the Mammalian Gene Collection (MGC).</title>
        <authorList>
            <consortium name="The MGC Project Team"/>
        </authorList>
    </citation>
    <scope>NUCLEOTIDE SEQUENCE [LARGE SCALE MRNA] OF 1-203</scope>
</reference>
<reference key="7">
    <citation type="journal article" date="2009" name="Immunity">
        <title>The phagosomal proteome in interferon-gamma-activated macrophages.</title>
        <authorList>
            <person name="Trost M."/>
            <person name="English L."/>
            <person name="Lemieux S."/>
            <person name="Courcelles M."/>
            <person name="Desjardins M."/>
            <person name="Thibault P."/>
        </authorList>
    </citation>
    <scope>PHOSPHORYLATION [LARGE SCALE ANALYSIS] AT SER-196</scope>
    <scope>IDENTIFICATION BY MASS SPECTROMETRY [LARGE SCALE ANALYSIS]</scope>
</reference>
<evidence type="ECO:0000250" key="1"/>
<evidence type="ECO:0000255" key="2"/>
<evidence type="ECO:0000269" key="3">
    <source>
    </source>
</evidence>
<evidence type="ECO:0000305" key="4"/>
<evidence type="ECO:0007744" key="5">
    <source>
    </source>
</evidence>